<evidence type="ECO:0000255" key="1">
    <source>
        <dbReference type="HAMAP-Rule" id="MF_00104"/>
    </source>
</evidence>
<sequence length="225" mass="25326">MEPIKNIPRLCRTLGYEFAEQALLDQALTHRSASNKHNERLEFLGDSILSIVISDALYHQFPKATEGDLSRMRATLVCGKMLAEIAIEFKLGDYLKLGPGELKSGGFRRESILADAVEAIIGAIYLDSDIEKCRKLVLNWYASRLRVIEPINQKDPKTLLQEHLQKFRKPLPIYKVVHTEGDAHEQTFTVECVVEDLRQAVVGVASSRRKAEQSAAAQVLELIKK</sequence>
<keyword id="KW-0963">Cytoplasm</keyword>
<keyword id="KW-0255">Endonuclease</keyword>
<keyword id="KW-0378">Hydrolase</keyword>
<keyword id="KW-0460">Magnesium</keyword>
<keyword id="KW-0479">Metal-binding</keyword>
<keyword id="KW-0507">mRNA processing</keyword>
<keyword id="KW-0540">Nuclease</keyword>
<keyword id="KW-0694">RNA-binding</keyword>
<keyword id="KW-0698">rRNA processing</keyword>
<keyword id="KW-0699">rRNA-binding</keyword>
<keyword id="KW-0819">tRNA processing</keyword>
<reference key="1">
    <citation type="journal article" date="2008" name="PLoS ONE">
        <title>Environmental adaptation: genomic analysis of the piezotolerant and psychrotolerant deep-sea iron reducing bacterium Shewanella piezotolerans WP3.</title>
        <authorList>
            <person name="Wang F."/>
            <person name="Wang J."/>
            <person name="Jian H."/>
            <person name="Zhang B."/>
            <person name="Li S."/>
            <person name="Wang F."/>
            <person name="Zeng X."/>
            <person name="Gao L."/>
            <person name="Bartlett D.H."/>
            <person name="Yu J."/>
            <person name="Hu S."/>
            <person name="Xiao X."/>
        </authorList>
    </citation>
    <scope>NUCLEOTIDE SEQUENCE [LARGE SCALE GENOMIC DNA]</scope>
    <source>
        <strain>WP3 / JCM 13877</strain>
    </source>
</reference>
<dbReference type="EC" id="3.1.26.3" evidence="1"/>
<dbReference type="EMBL" id="CP000472">
    <property type="protein sequence ID" value="ACJ30461.1"/>
    <property type="molecule type" value="Genomic_DNA"/>
</dbReference>
<dbReference type="RefSeq" id="WP_020913805.1">
    <property type="nucleotide sequence ID" value="NC_011566.1"/>
</dbReference>
<dbReference type="SMR" id="B8CQJ5"/>
<dbReference type="STRING" id="225849.swp_3780"/>
<dbReference type="KEGG" id="swp:swp_3780"/>
<dbReference type="eggNOG" id="COG0571">
    <property type="taxonomic scope" value="Bacteria"/>
</dbReference>
<dbReference type="HOGENOM" id="CLU_000907_1_1_6"/>
<dbReference type="OrthoDB" id="9805026at2"/>
<dbReference type="Proteomes" id="UP000000753">
    <property type="component" value="Chromosome"/>
</dbReference>
<dbReference type="GO" id="GO:0005737">
    <property type="term" value="C:cytoplasm"/>
    <property type="evidence" value="ECO:0007669"/>
    <property type="project" value="UniProtKB-SubCell"/>
</dbReference>
<dbReference type="GO" id="GO:0003725">
    <property type="term" value="F:double-stranded RNA binding"/>
    <property type="evidence" value="ECO:0007669"/>
    <property type="project" value="TreeGrafter"/>
</dbReference>
<dbReference type="GO" id="GO:0046872">
    <property type="term" value="F:metal ion binding"/>
    <property type="evidence" value="ECO:0007669"/>
    <property type="project" value="UniProtKB-KW"/>
</dbReference>
<dbReference type="GO" id="GO:0004525">
    <property type="term" value="F:ribonuclease III activity"/>
    <property type="evidence" value="ECO:0007669"/>
    <property type="project" value="UniProtKB-UniRule"/>
</dbReference>
<dbReference type="GO" id="GO:0019843">
    <property type="term" value="F:rRNA binding"/>
    <property type="evidence" value="ECO:0007669"/>
    <property type="project" value="UniProtKB-KW"/>
</dbReference>
<dbReference type="GO" id="GO:0006397">
    <property type="term" value="P:mRNA processing"/>
    <property type="evidence" value="ECO:0007669"/>
    <property type="project" value="UniProtKB-UniRule"/>
</dbReference>
<dbReference type="GO" id="GO:0010468">
    <property type="term" value="P:regulation of gene expression"/>
    <property type="evidence" value="ECO:0007669"/>
    <property type="project" value="TreeGrafter"/>
</dbReference>
<dbReference type="GO" id="GO:0006364">
    <property type="term" value="P:rRNA processing"/>
    <property type="evidence" value="ECO:0007669"/>
    <property type="project" value="UniProtKB-UniRule"/>
</dbReference>
<dbReference type="GO" id="GO:0008033">
    <property type="term" value="P:tRNA processing"/>
    <property type="evidence" value="ECO:0007669"/>
    <property type="project" value="UniProtKB-KW"/>
</dbReference>
<dbReference type="CDD" id="cd10845">
    <property type="entry name" value="DSRM_RNAse_III_family"/>
    <property type="match status" value="1"/>
</dbReference>
<dbReference type="CDD" id="cd00593">
    <property type="entry name" value="RIBOc"/>
    <property type="match status" value="1"/>
</dbReference>
<dbReference type="FunFam" id="1.10.1520.10:FF:000001">
    <property type="entry name" value="Ribonuclease 3"/>
    <property type="match status" value="1"/>
</dbReference>
<dbReference type="FunFam" id="3.30.160.20:FF:000003">
    <property type="entry name" value="Ribonuclease 3"/>
    <property type="match status" value="1"/>
</dbReference>
<dbReference type="Gene3D" id="3.30.160.20">
    <property type="match status" value="1"/>
</dbReference>
<dbReference type="Gene3D" id="1.10.1520.10">
    <property type="entry name" value="Ribonuclease III domain"/>
    <property type="match status" value="1"/>
</dbReference>
<dbReference type="HAMAP" id="MF_00104">
    <property type="entry name" value="RNase_III"/>
    <property type="match status" value="1"/>
</dbReference>
<dbReference type="InterPro" id="IPR014720">
    <property type="entry name" value="dsRBD_dom"/>
</dbReference>
<dbReference type="InterPro" id="IPR011907">
    <property type="entry name" value="RNase_III"/>
</dbReference>
<dbReference type="InterPro" id="IPR000999">
    <property type="entry name" value="RNase_III_dom"/>
</dbReference>
<dbReference type="InterPro" id="IPR036389">
    <property type="entry name" value="RNase_III_sf"/>
</dbReference>
<dbReference type="NCBIfam" id="TIGR02191">
    <property type="entry name" value="RNaseIII"/>
    <property type="match status" value="1"/>
</dbReference>
<dbReference type="PANTHER" id="PTHR11207:SF0">
    <property type="entry name" value="RIBONUCLEASE 3"/>
    <property type="match status" value="1"/>
</dbReference>
<dbReference type="PANTHER" id="PTHR11207">
    <property type="entry name" value="RIBONUCLEASE III"/>
    <property type="match status" value="1"/>
</dbReference>
<dbReference type="Pfam" id="PF00035">
    <property type="entry name" value="dsrm"/>
    <property type="match status" value="1"/>
</dbReference>
<dbReference type="Pfam" id="PF14622">
    <property type="entry name" value="Ribonucleas_3_3"/>
    <property type="match status" value="1"/>
</dbReference>
<dbReference type="SMART" id="SM00358">
    <property type="entry name" value="DSRM"/>
    <property type="match status" value="1"/>
</dbReference>
<dbReference type="SMART" id="SM00535">
    <property type="entry name" value="RIBOc"/>
    <property type="match status" value="1"/>
</dbReference>
<dbReference type="SUPFAM" id="SSF54768">
    <property type="entry name" value="dsRNA-binding domain-like"/>
    <property type="match status" value="1"/>
</dbReference>
<dbReference type="SUPFAM" id="SSF69065">
    <property type="entry name" value="RNase III domain-like"/>
    <property type="match status" value="1"/>
</dbReference>
<dbReference type="PROSITE" id="PS50137">
    <property type="entry name" value="DS_RBD"/>
    <property type="match status" value="1"/>
</dbReference>
<dbReference type="PROSITE" id="PS00517">
    <property type="entry name" value="RNASE_3_1"/>
    <property type="match status" value="1"/>
</dbReference>
<dbReference type="PROSITE" id="PS50142">
    <property type="entry name" value="RNASE_3_2"/>
    <property type="match status" value="1"/>
</dbReference>
<name>RNC_SHEPW</name>
<feature type="chain" id="PRO_1000194431" description="Ribonuclease 3">
    <location>
        <begin position="1"/>
        <end position="225"/>
    </location>
</feature>
<feature type="domain" description="RNase III" evidence="1">
    <location>
        <begin position="7"/>
        <end position="129"/>
    </location>
</feature>
<feature type="domain" description="DRBM" evidence="1">
    <location>
        <begin position="155"/>
        <end position="225"/>
    </location>
</feature>
<feature type="active site" evidence="1">
    <location>
        <position position="46"/>
    </location>
</feature>
<feature type="active site" evidence="1">
    <location>
        <position position="118"/>
    </location>
</feature>
<feature type="binding site" evidence="1">
    <location>
        <position position="42"/>
    </location>
    <ligand>
        <name>Mg(2+)</name>
        <dbReference type="ChEBI" id="CHEBI:18420"/>
    </ligand>
</feature>
<feature type="binding site" evidence="1">
    <location>
        <position position="115"/>
    </location>
    <ligand>
        <name>Mg(2+)</name>
        <dbReference type="ChEBI" id="CHEBI:18420"/>
    </ligand>
</feature>
<feature type="binding site" evidence="1">
    <location>
        <position position="118"/>
    </location>
    <ligand>
        <name>Mg(2+)</name>
        <dbReference type="ChEBI" id="CHEBI:18420"/>
    </ligand>
</feature>
<protein>
    <recommendedName>
        <fullName evidence="1">Ribonuclease 3</fullName>
        <ecNumber evidence="1">3.1.26.3</ecNumber>
    </recommendedName>
    <alternativeName>
        <fullName evidence="1">Ribonuclease III</fullName>
        <shortName evidence="1">RNase III</shortName>
    </alternativeName>
</protein>
<comment type="function">
    <text evidence="1">Digests double-stranded RNA. Involved in the processing of primary rRNA transcript to yield the immediate precursors to the large and small rRNAs (23S and 16S). Processes some mRNAs, and tRNAs when they are encoded in the rRNA operon. Processes pre-crRNA and tracrRNA of type II CRISPR loci if present in the organism.</text>
</comment>
<comment type="catalytic activity">
    <reaction evidence="1">
        <text>Endonucleolytic cleavage to 5'-phosphomonoester.</text>
        <dbReference type="EC" id="3.1.26.3"/>
    </reaction>
</comment>
<comment type="cofactor">
    <cofactor evidence="1">
        <name>Mg(2+)</name>
        <dbReference type="ChEBI" id="CHEBI:18420"/>
    </cofactor>
</comment>
<comment type="subunit">
    <text evidence="1">Homodimer.</text>
</comment>
<comment type="subcellular location">
    <subcellularLocation>
        <location evidence="1">Cytoplasm</location>
    </subcellularLocation>
</comment>
<comment type="similarity">
    <text evidence="1">Belongs to the ribonuclease III family.</text>
</comment>
<accession>B8CQJ5</accession>
<proteinExistence type="inferred from homology"/>
<gene>
    <name evidence="1" type="primary">rnc</name>
    <name type="ordered locus">swp_3780</name>
</gene>
<organism>
    <name type="scientific">Shewanella piezotolerans (strain WP3 / JCM 13877)</name>
    <dbReference type="NCBI Taxonomy" id="225849"/>
    <lineage>
        <taxon>Bacteria</taxon>
        <taxon>Pseudomonadati</taxon>
        <taxon>Pseudomonadota</taxon>
        <taxon>Gammaproteobacteria</taxon>
        <taxon>Alteromonadales</taxon>
        <taxon>Shewanellaceae</taxon>
        <taxon>Shewanella</taxon>
    </lineage>
</organism>